<reference key="1">
    <citation type="journal article" date="2002" name="Proc. Natl. Acad. Sci. U.S.A.">
        <title>Genome sequence of Streptococcus mutans UA159, a cariogenic dental pathogen.</title>
        <authorList>
            <person name="Ajdic D.J."/>
            <person name="McShan W.M."/>
            <person name="McLaughlin R.E."/>
            <person name="Savic G."/>
            <person name="Chang J."/>
            <person name="Carson M.B."/>
            <person name="Primeaux C."/>
            <person name="Tian R."/>
            <person name="Kenton S."/>
            <person name="Jia H.G."/>
            <person name="Lin S.P."/>
            <person name="Qian Y."/>
            <person name="Li S."/>
            <person name="Zhu H."/>
            <person name="Najar F.Z."/>
            <person name="Lai H."/>
            <person name="White J."/>
            <person name="Roe B.A."/>
            <person name="Ferretti J.J."/>
        </authorList>
    </citation>
    <scope>NUCLEOTIDE SEQUENCE [LARGE SCALE GENOMIC DNA]</scope>
    <source>
        <strain>ATCC 700610 / UA159</strain>
    </source>
</reference>
<protein>
    <recommendedName>
        <fullName evidence="1">Acetate kinase</fullName>
        <ecNumber evidence="1">2.7.2.1</ecNumber>
    </recommendedName>
    <alternativeName>
        <fullName evidence="1">Acetokinase</fullName>
    </alternativeName>
</protein>
<comment type="function">
    <text evidence="1">Catalyzes the formation of acetyl phosphate from acetate and ATP. Can also catalyze the reverse reaction.</text>
</comment>
<comment type="catalytic activity">
    <reaction evidence="1">
        <text>acetate + ATP = acetyl phosphate + ADP</text>
        <dbReference type="Rhea" id="RHEA:11352"/>
        <dbReference type="ChEBI" id="CHEBI:22191"/>
        <dbReference type="ChEBI" id="CHEBI:30089"/>
        <dbReference type="ChEBI" id="CHEBI:30616"/>
        <dbReference type="ChEBI" id="CHEBI:456216"/>
        <dbReference type="EC" id="2.7.2.1"/>
    </reaction>
</comment>
<comment type="cofactor">
    <cofactor evidence="1">
        <name>Mg(2+)</name>
        <dbReference type="ChEBI" id="CHEBI:18420"/>
    </cofactor>
    <cofactor evidence="1">
        <name>Mn(2+)</name>
        <dbReference type="ChEBI" id="CHEBI:29035"/>
    </cofactor>
    <text evidence="1">Mg(2+). Can also accept Mn(2+).</text>
</comment>
<comment type="pathway">
    <text evidence="1">Metabolic intermediate biosynthesis; acetyl-CoA biosynthesis; acetyl-CoA from acetate: step 1/2.</text>
</comment>
<comment type="subunit">
    <text evidence="1">Homodimer.</text>
</comment>
<comment type="subcellular location">
    <subcellularLocation>
        <location evidence="1">Cytoplasm</location>
    </subcellularLocation>
</comment>
<comment type="similarity">
    <text evidence="1">Belongs to the acetokinase family.</text>
</comment>
<name>ACKA_STRMU</name>
<organism>
    <name type="scientific">Streptococcus mutans serotype c (strain ATCC 700610 / UA159)</name>
    <dbReference type="NCBI Taxonomy" id="210007"/>
    <lineage>
        <taxon>Bacteria</taxon>
        <taxon>Bacillati</taxon>
        <taxon>Bacillota</taxon>
        <taxon>Bacilli</taxon>
        <taxon>Lactobacillales</taxon>
        <taxon>Streptococcaceae</taxon>
        <taxon>Streptococcus</taxon>
    </lineage>
</organism>
<gene>
    <name evidence="1" type="primary">ackA</name>
    <name type="ordered locus">SMU_1978</name>
</gene>
<evidence type="ECO:0000255" key="1">
    <source>
        <dbReference type="HAMAP-Rule" id="MF_00020"/>
    </source>
</evidence>
<feature type="chain" id="PRO_0000107622" description="Acetate kinase">
    <location>
        <begin position="1"/>
        <end position="399"/>
    </location>
</feature>
<feature type="active site" description="Proton donor/acceptor" evidence="1">
    <location>
        <position position="147"/>
    </location>
</feature>
<feature type="binding site" evidence="1">
    <location>
        <position position="8"/>
    </location>
    <ligand>
        <name>Mg(2+)</name>
        <dbReference type="ChEBI" id="CHEBI:18420"/>
    </ligand>
</feature>
<feature type="binding site" evidence="1">
    <location>
        <position position="15"/>
    </location>
    <ligand>
        <name>ATP</name>
        <dbReference type="ChEBI" id="CHEBI:30616"/>
    </ligand>
</feature>
<feature type="binding site" evidence="1">
    <location>
        <position position="89"/>
    </location>
    <ligand>
        <name>substrate</name>
    </ligand>
</feature>
<feature type="binding site" evidence="1">
    <location>
        <begin position="207"/>
        <end position="211"/>
    </location>
    <ligand>
        <name>ATP</name>
        <dbReference type="ChEBI" id="CHEBI:30616"/>
    </ligand>
</feature>
<feature type="binding site" evidence="1">
    <location>
        <begin position="284"/>
        <end position="286"/>
    </location>
    <ligand>
        <name>ATP</name>
        <dbReference type="ChEBI" id="CHEBI:30616"/>
    </ligand>
</feature>
<feature type="binding site" evidence="1">
    <location>
        <begin position="332"/>
        <end position="336"/>
    </location>
    <ligand>
        <name>ATP</name>
        <dbReference type="ChEBI" id="CHEBI:30616"/>
    </ligand>
</feature>
<feature type="binding site" evidence="1">
    <location>
        <position position="385"/>
    </location>
    <ligand>
        <name>Mg(2+)</name>
        <dbReference type="ChEBI" id="CHEBI:18420"/>
    </ligand>
</feature>
<feature type="site" description="Transition state stabilizer" evidence="1">
    <location>
        <position position="179"/>
    </location>
</feature>
<feature type="site" description="Transition state stabilizer" evidence="1">
    <location>
        <position position="240"/>
    </location>
</feature>
<keyword id="KW-0067">ATP-binding</keyword>
<keyword id="KW-0963">Cytoplasm</keyword>
<keyword id="KW-0418">Kinase</keyword>
<keyword id="KW-0460">Magnesium</keyword>
<keyword id="KW-0479">Metal-binding</keyword>
<keyword id="KW-0547">Nucleotide-binding</keyword>
<keyword id="KW-1185">Reference proteome</keyword>
<keyword id="KW-0808">Transferase</keyword>
<accession>Q8DS57</accession>
<sequence length="399" mass="43732">MSKTISINAGSSSLKWQLYLMPEEKVLAKGLIERIGKDDAISTVKFNGQEASETLAIKDHTAAVKILLDDLIHLDIIKSYDEITGVGHRVVAGGTYFNESALVDSEEVIKKVEELALLAPLHNKANAAGIRAFKKILPDITSVVVFDTAFHTTMPEVAYRYPLPNKYFTENQVRKYGAHGTSHYYVAHEAAKILEKPIEKLKLITVHMGNGVSLTAVDGGKSVDTSMGFTPLGGVMMGTRTGDLDPAVIPYLMDNTEDFKTPEDIRRIFNNESGLLGISELSNDMREIEAATAAGNKNATLAYNMFIDRIIKHIGAYAAVMNGVDAIVFTAGIGENDAHIRSEIMKHFDWLGADIVTEKNEKRPVYGVISSNAAKVKVLVIPTDEELVIARDVERLKTK</sequence>
<proteinExistence type="inferred from homology"/>
<dbReference type="EC" id="2.7.2.1" evidence="1"/>
<dbReference type="EMBL" id="AE014133">
    <property type="protein sequence ID" value="AAN59583.1"/>
    <property type="molecule type" value="Genomic_DNA"/>
</dbReference>
<dbReference type="RefSeq" id="NP_722277.1">
    <property type="nucleotide sequence ID" value="NC_004350.2"/>
</dbReference>
<dbReference type="RefSeq" id="WP_002263443.1">
    <property type="nucleotide sequence ID" value="NC_004350.2"/>
</dbReference>
<dbReference type="SMR" id="Q8DS57"/>
<dbReference type="STRING" id="210007.SMU_1978"/>
<dbReference type="KEGG" id="smu:SMU_1978"/>
<dbReference type="PATRIC" id="fig|210007.7.peg.1760"/>
<dbReference type="eggNOG" id="COG0282">
    <property type="taxonomic scope" value="Bacteria"/>
</dbReference>
<dbReference type="HOGENOM" id="CLU_020352_0_1_9"/>
<dbReference type="OrthoDB" id="9802453at2"/>
<dbReference type="PhylomeDB" id="Q8DS57"/>
<dbReference type="UniPathway" id="UPA00340">
    <property type="reaction ID" value="UER00458"/>
</dbReference>
<dbReference type="Proteomes" id="UP000002512">
    <property type="component" value="Chromosome"/>
</dbReference>
<dbReference type="GO" id="GO:0005737">
    <property type="term" value="C:cytoplasm"/>
    <property type="evidence" value="ECO:0007669"/>
    <property type="project" value="UniProtKB-SubCell"/>
</dbReference>
<dbReference type="GO" id="GO:0008776">
    <property type="term" value="F:acetate kinase activity"/>
    <property type="evidence" value="ECO:0007669"/>
    <property type="project" value="UniProtKB-UniRule"/>
</dbReference>
<dbReference type="GO" id="GO:0005524">
    <property type="term" value="F:ATP binding"/>
    <property type="evidence" value="ECO:0007669"/>
    <property type="project" value="UniProtKB-KW"/>
</dbReference>
<dbReference type="GO" id="GO:0000287">
    <property type="term" value="F:magnesium ion binding"/>
    <property type="evidence" value="ECO:0007669"/>
    <property type="project" value="UniProtKB-UniRule"/>
</dbReference>
<dbReference type="GO" id="GO:0006083">
    <property type="term" value="P:acetate metabolic process"/>
    <property type="evidence" value="ECO:0007669"/>
    <property type="project" value="TreeGrafter"/>
</dbReference>
<dbReference type="GO" id="GO:0006085">
    <property type="term" value="P:acetyl-CoA biosynthetic process"/>
    <property type="evidence" value="ECO:0007669"/>
    <property type="project" value="UniProtKB-UniRule"/>
</dbReference>
<dbReference type="CDD" id="cd24010">
    <property type="entry name" value="ASKHA_NBD_AcK_PK"/>
    <property type="match status" value="1"/>
</dbReference>
<dbReference type="Gene3D" id="3.30.420.40">
    <property type="match status" value="2"/>
</dbReference>
<dbReference type="HAMAP" id="MF_00020">
    <property type="entry name" value="Acetate_kinase"/>
    <property type="match status" value="1"/>
</dbReference>
<dbReference type="InterPro" id="IPR004372">
    <property type="entry name" value="Ac/propionate_kinase"/>
</dbReference>
<dbReference type="InterPro" id="IPR000890">
    <property type="entry name" value="Aliphatic_acid_kin_short-chain"/>
</dbReference>
<dbReference type="InterPro" id="IPR023865">
    <property type="entry name" value="Aliphatic_acid_kinase_CS"/>
</dbReference>
<dbReference type="InterPro" id="IPR043129">
    <property type="entry name" value="ATPase_NBD"/>
</dbReference>
<dbReference type="NCBIfam" id="TIGR00016">
    <property type="entry name" value="ackA"/>
    <property type="match status" value="1"/>
</dbReference>
<dbReference type="PANTHER" id="PTHR21060">
    <property type="entry name" value="ACETATE KINASE"/>
    <property type="match status" value="1"/>
</dbReference>
<dbReference type="PANTHER" id="PTHR21060:SF15">
    <property type="entry name" value="ACETATE KINASE-RELATED"/>
    <property type="match status" value="1"/>
</dbReference>
<dbReference type="Pfam" id="PF00871">
    <property type="entry name" value="Acetate_kinase"/>
    <property type="match status" value="1"/>
</dbReference>
<dbReference type="PIRSF" id="PIRSF000722">
    <property type="entry name" value="Acetate_prop_kin"/>
    <property type="match status" value="1"/>
</dbReference>
<dbReference type="PRINTS" id="PR00471">
    <property type="entry name" value="ACETATEKNASE"/>
</dbReference>
<dbReference type="SUPFAM" id="SSF53067">
    <property type="entry name" value="Actin-like ATPase domain"/>
    <property type="match status" value="2"/>
</dbReference>
<dbReference type="PROSITE" id="PS01075">
    <property type="entry name" value="ACETATE_KINASE_1"/>
    <property type="match status" value="1"/>
</dbReference>
<dbReference type="PROSITE" id="PS01076">
    <property type="entry name" value="ACETATE_KINASE_2"/>
    <property type="match status" value="1"/>
</dbReference>